<proteinExistence type="inferred from homology"/>
<comment type="function">
    <text evidence="2">One of the essential components for the initiation of protein synthesis. Protects formylmethionyl-tRNA from spontaneous hydrolysis and promotes its binding to the 30S ribosomal subunits. Also involved in the hydrolysis of GTP during the formation of the 70S ribosomal complex.</text>
</comment>
<comment type="subcellular location">
    <subcellularLocation>
        <location evidence="2">Cytoplasm</location>
    </subcellularLocation>
</comment>
<comment type="similarity">
    <text evidence="2">Belongs to the TRAFAC class translation factor GTPase superfamily. Classic translation factor GTPase family. IF-2 subfamily.</text>
</comment>
<feature type="chain" id="PRO_0000137274" description="Translation initiation factor IF-2">
    <location>
        <begin position="1"/>
        <end position="707"/>
    </location>
</feature>
<feature type="domain" description="tr-type G">
    <location>
        <begin position="209"/>
        <end position="378"/>
    </location>
</feature>
<feature type="region of interest" description="Disordered" evidence="3">
    <location>
        <begin position="55"/>
        <end position="88"/>
    </location>
</feature>
<feature type="region of interest" description="G1" evidence="1">
    <location>
        <begin position="218"/>
        <end position="225"/>
    </location>
</feature>
<feature type="region of interest" description="G2" evidence="1">
    <location>
        <begin position="243"/>
        <end position="247"/>
    </location>
</feature>
<feature type="region of interest" description="G3" evidence="1">
    <location>
        <begin position="264"/>
        <end position="267"/>
    </location>
</feature>
<feature type="region of interest" description="G4" evidence="1">
    <location>
        <begin position="318"/>
        <end position="321"/>
    </location>
</feature>
<feature type="region of interest" description="G5" evidence="1">
    <location>
        <begin position="354"/>
        <end position="356"/>
    </location>
</feature>
<feature type="compositionally biased region" description="Basic and acidic residues" evidence="3">
    <location>
        <begin position="55"/>
        <end position="80"/>
    </location>
</feature>
<feature type="binding site" evidence="2">
    <location>
        <begin position="218"/>
        <end position="225"/>
    </location>
    <ligand>
        <name>GTP</name>
        <dbReference type="ChEBI" id="CHEBI:37565"/>
    </ligand>
</feature>
<feature type="binding site" evidence="2">
    <location>
        <begin position="264"/>
        <end position="268"/>
    </location>
    <ligand>
        <name>GTP</name>
        <dbReference type="ChEBI" id="CHEBI:37565"/>
    </ligand>
</feature>
<feature type="binding site" evidence="2">
    <location>
        <begin position="318"/>
        <end position="321"/>
    </location>
    <ligand>
        <name>GTP</name>
        <dbReference type="ChEBI" id="CHEBI:37565"/>
    </ligand>
</feature>
<organism>
    <name type="scientific">Caldanaerobacter subterraneus subsp. tengcongensis (strain DSM 15242 / JCM 11007 / NBRC 100824 / MB4)</name>
    <name type="common">Thermoanaerobacter tengcongensis</name>
    <dbReference type="NCBI Taxonomy" id="273068"/>
    <lineage>
        <taxon>Bacteria</taxon>
        <taxon>Bacillati</taxon>
        <taxon>Bacillota</taxon>
        <taxon>Clostridia</taxon>
        <taxon>Thermoanaerobacterales</taxon>
        <taxon>Thermoanaerobacteraceae</taxon>
        <taxon>Caldanaerobacter</taxon>
    </lineage>
</organism>
<protein>
    <recommendedName>
        <fullName evidence="2">Translation initiation factor IF-2</fullName>
    </recommendedName>
</protein>
<keyword id="KW-0963">Cytoplasm</keyword>
<keyword id="KW-0342">GTP-binding</keyword>
<keyword id="KW-0396">Initiation factor</keyword>
<keyword id="KW-0547">Nucleotide-binding</keyword>
<keyword id="KW-0648">Protein biosynthesis</keyword>
<keyword id="KW-1185">Reference proteome</keyword>
<reference key="1">
    <citation type="journal article" date="2002" name="Genome Res.">
        <title>A complete sequence of the T. tengcongensis genome.</title>
        <authorList>
            <person name="Bao Q."/>
            <person name="Tian Y."/>
            <person name="Li W."/>
            <person name="Xu Z."/>
            <person name="Xuan Z."/>
            <person name="Hu S."/>
            <person name="Dong W."/>
            <person name="Yang J."/>
            <person name="Chen Y."/>
            <person name="Xue Y."/>
            <person name="Xu Y."/>
            <person name="Lai X."/>
            <person name="Huang L."/>
            <person name="Dong X."/>
            <person name="Ma Y."/>
            <person name="Ling L."/>
            <person name="Tan H."/>
            <person name="Chen R."/>
            <person name="Wang J."/>
            <person name="Yu J."/>
            <person name="Yang H."/>
        </authorList>
    </citation>
    <scope>NUCLEOTIDE SEQUENCE [LARGE SCALE GENOMIC DNA]</scope>
    <source>
        <strain>DSM 15242 / JCM 11007 / NBRC 100824 / MB4</strain>
    </source>
</reference>
<sequence length="707" mass="78857">MEVNNMSKTRVYELAKELNISSKDLLSKLSDLDIKVKNHMSTLEDEEVELIKDLLAEKPKEEKQKDQKNHEQEAQDKEEKEIEEDSFYEDREEKRAYKKSFKKGGKKNKKLQKKFVSEESAKEDEIKIITIPEFLTVKELAEKMKVNPTEIIKKLIAQGIMVTVNQQIDFETASKIAEEYGFLVDKEEVKDELEAIFEDTPDREEDLKPRPPIVTVMGHVDHGKTSLLDAIRKTNVTMKEMGGITQHIGASVVEINDKKVVFLDTPGHEAFTAMRARGASVTDIVVLVVAADDGVMPQTIEAINHVKAANVPLIVAINKIDLPTANPDRVKTELSELGLVPEEWGGNTICVPVSAKKNIGIDDLLEMILLVAEMEDLKANPNKPARGTVIEAKLEKGKGPVATVIVQNGTLQVGDAVIAGTTYGKVRAMFDDKGRKIKKAGPSMPVEILGFSEVPEAGDKFVVVENEKKARELAEKRREVQRELELKKKQKVSLEDLFRQIQEGTVKELNVIIKADVQGSVEALRKSLEELSNEEVRIRVIHGAVGAITETDVMLASASNAIIIGFNVRPETNAKALAEKEKVEIKLYRIIYDAIEDVKAAMKGMLEPKYKEVELGRAEVRAVFKIPGVGNVAGCYVLNGKIARNADVRIVRDGIVIYEGKIASLKRFKDDVREVQQGFECGIGIEKFNDIKEGDIIEAYTMEEIPR</sequence>
<name>IF2_CALS4</name>
<dbReference type="EMBL" id="AE008691">
    <property type="protein sequence ID" value="AAM24615.1"/>
    <property type="molecule type" value="Genomic_DNA"/>
</dbReference>
<dbReference type="RefSeq" id="WP_011025678.1">
    <property type="nucleotide sequence ID" value="NC_003869.1"/>
</dbReference>
<dbReference type="SMR" id="Q8RA37"/>
<dbReference type="STRING" id="273068.TTE1393"/>
<dbReference type="KEGG" id="tte:TTE1393"/>
<dbReference type="eggNOG" id="COG0532">
    <property type="taxonomic scope" value="Bacteria"/>
</dbReference>
<dbReference type="HOGENOM" id="CLU_006301_5_1_9"/>
<dbReference type="OrthoDB" id="9811804at2"/>
<dbReference type="Proteomes" id="UP000000555">
    <property type="component" value="Chromosome"/>
</dbReference>
<dbReference type="GO" id="GO:0005829">
    <property type="term" value="C:cytosol"/>
    <property type="evidence" value="ECO:0007669"/>
    <property type="project" value="TreeGrafter"/>
</dbReference>
<dbReference type="GO" id="GO:0005525">
    <property type="term" value="F:GTP binding"/>
    <property type="evidence" value="ECO:0007669"/>
    <property type="project" value="UniProtKB-KW"/>
</dbReference>
<dbReference type="GO" id="GO:0003924">
    <property type="term" value="F:GTPase activity"/>
    <property type="evidence" value="ECO:0007669"/>
    <property type="project" value="UniProtKB-UniRule"/>
</dbReference>
<dbReference type="GO" id="GO:0003743">
    <property type="term" value="F:translation initiation factor activity"/>
    <property type="evidence" value="ECO:0007669"/>
    <property type="project" value="UniProtKB-UniRule"/>
</dbReference>
<dbReference type="CDD" id="cd01887">
    <property type="entry name" value="IF2_eIF5B"/>
    <property type="match status" value="1"/>
</dbReference>
<dbReference type="CDD" id="cd03702">
    <property type="entry name" value="IF2_mtIF2_II"/>
    <property type="match status" value="1"/>
</dbReference>
<dbReference type="CDD" id="cd03692">
    <property type="entry name" value="mtIF2_IVc"/>
    <property type="match status" value="1"/>
</dbReference>
<dbReference type="FunFam" id="2.40.30.10:FF:000007">
    <property type="entry name" value="Translation initiation factor IF-2"/>
    <property type="match status" value="1"/>
</dbReference>
<dbReference type="FunFam" id="2.40.30.10:FF:000008">
    <property type="entry name" value="Translation initiation factor IF-2"/>
    <property type="match status" value="1"/>
</dbReference>
<dbReference type="FunFam" id="3.40.50.10050:FF:000001">
    <property type="entry name" value="Translation initiation factor IF-2"/>
    <property type="match status" value="1"/>
</dbReference>
<dbReference type="FunFam" id="3.40.50.300:FF:000019">
    <property type="entry name" value="Translation initiation factor IF-2"/>
    <property type="match status" value="1"/>
</dbReference>
<dbReference type="Gene3D" id="1.10.10.2480">
    <property type="match status" value="1"/>
</dbReference>
<dbReference type="Gene3D" id="3.40.50.300">
    <property type="entry name" value="P-loop containing nucleotide triphosphate hydrolases"/>
    <property type="match status" value="1"/>
</dbReference>
<dbReference type="Gene3D" id="2.40.30.10">
    <property type="entry name" value="Translation factors"/>
    <property type="match status" value="2"/>
</dbReference>
<dbReference type="Gene3D" id="3.40.50.10050">
    <property type="entry name" value="Translation initiation factor IF- 2, domain 3"/>
    <property type="match status" value="1"/>
</dbReference>
<dbReference type="HAMAP" id="MF_00100_B">
    <property type="entry name" value="IF_2_B"/>
    <property type="match status" value="1"/>
</dbReference>
<dbReference type="InterPro" id="IPR053905">
    <property type="entry name" value="EF-G-like_DII"/>
</dbReference>
<dbReference type="InterPro" id="IPR004161">
    <property type="entry name" value="EFTu-like_2"/>
</dbReference>
<dbReference type="InterPro" id="IPR044145">
    <property type="entry name" value="IF2_II"/>
</dbReference>
<dbReference type="InterPro" id="IPR006847">
    <property type="entry name" value="IF2_N"/>
</dbReference>
<dbReference type="InterPro" id="IPR027417">
    <property type="entry name" value="P-loop_NTPase"/>
</dbReference>
<dbReference type="InterPro" id="IPR005225">
    <property type="entry name" value="Small_GTP-bd"/>
</dbReference>
<dbReference type="InterPro" id="IPR000795">
    <property type="entry name" value="T_Tr_GTP-bd_dom"/>
</dbReference>
<dbReference type="InterPro" id="IPR000178">
    <property type="entry name" value="TF_IF2_bacterial-like"/>
</dbReference>
<dbReference type="InterPro" id="IPR015760">
    <property type="entry name" value="TIF_IF2"/>
</dbReference>
<dbReference type="InterPro" id="IPR023115">
    <property type="entry name" value="TIF_IF2_dom3"/>
</dbReference>
<dbReference type="InterPro" id="IPR036925">
    <property type="entry name" value="TIF_IF2_dom3_sf"/>
</dbReference>
<dbReference type="InterPro" id="IPR009000">
    <property type="entry name" value="Transl_B-barrel_sf"/>
</dbReference>
<dbReference type="NCBIfam" id="TIGR00487">
    <property type="entry name" value="IF-2"/>
    <property type="match status" value="1"/>
</dbReference>
<dbReference type="NCBIfam" id="TIGR00231">
    <property type="entry name" value="small_GTP"/>
    <property type="match status" value="1"/>
</dbReference>
<dbReference type="PANTHER" id="PTHR43381:SF5">
    <property type="entry name" value="TR-TYPE G DOMAIN-CONTAINING PROTEIN"/>
    <property type="match status" value="1"/>
</dbReference>
<dbReference type="PANTHER" id="PTHR43381">
    <property type="entry name" value="TRANSLATION INITIATION FACTOR IF-2-RELATED"/>
    <property type="match status" value="1"/>
</dbReference>
<dbReference type="Pfam" id="PF22042">
    <property type="entry name" value="EF-G_D2"/>
    <property type="match status" value="1"/>
</dbReference>
<dbReference type="Pfam" id="PF00009">
    <property type="entry name" value="GTP_EFTU"/>
    <property type="match status" value="1"/>
</dbReference>
<dbReference type="Pfam" id="PF03144">
    <property type="entry name" value="GTP_EFTU_D2"/>
    <property type="match status" value="1"/>
</dbReference>
<dbReference type="Pfam" id="PF11987">
    <property type="entry name" value="IF-2"/>
    <property type="match status" value="1"/>
</dbReference>
<dbReference type="Pfam" id="PF04760">
    <property type="entry name" value="IF2_N"/>
    <property type="match status" value="2"/>
</dbReference>
<dbReference type="SUPFAM" id="SSF52156">
    <property type="entry name" value="Initiation factor IF2/eIF5b, domain 3"/>
    <property type="match status" value="1"/>
</dbReference>
<dbReference type="SUPFAM" id="SSF52540">
    <property type="entry name" value="P-loop containing nucleoside triphosphate hydrolases"/>
    <property type="match status" value="1"/>
</dbReference>
<dbReference type="SUPFAM" id="SSF50447">
    <property type="entry name" value="Translation proteins"/>
    <property type="match status" value="2"/>
</dbReference>
<dbReference type="PROSITE" id="PS51722">
    <property type="entry name" value="G_TR_2"/>
    <property type="match status" value="1"/>
</dbReference>
<dbReference type="PROSITE" id="PS01176">
    <property type="entry name" value="IF2"/>
    <property type="match status" value="1"/>
</dbReference>
<evidence type="ECO:0000250" key="1"/>
<evidence type="ECO:0000255" key="2">
    <source>
        <dbReference type="HAMAP-Rule" id="MF_00100"/>
    </source>
</evidence>
<evidence type="ECO:0000256" key="3">
    <source>
        <dbReference type="SAM" id="MobiDB-lite"/>
    </source>
</evidence>
<accession>Q8RA37</accession>
<gene>
    <name evidence="2" type="primary">infB</name>
    <name type="ordered locus">TTE1393</name>
</gene>